<accession>Q02574</accession>
<accession>D6VYT4</accession>
<accession>P87260</accession>
<accession>Q05887</accession>
<name>MEC3_YEAST</name>
<dbReference type="EMBL" id="U30906">
    <property type="protein sequence ID" value="AAB61448.1"/>
    <property type="molecule type" value="Genomic_DNA"/>
</dbReference>
<dbReference type="EMBL" id="U17243">
    <property type="protein sequence ID" value="AAB67334.1"/>
    <property type="molecule type" value="Genomic_DNA"/>
</dbReference>
<dbReference type="EMBL" id="BK006945">
    <property type="protein sequence ID" value="DAA09600.1"/>
    <property type="molecule type" value="Genomic_DNA"/>
</dbReference>
<dbReference type="PIR" id="S50373">
    <property type="entry name" value="S50373"/>
</dbReference>
<dbReference type="RefSeq" id="NP_013391.1">
    <property type="nucleotide sequence ID" value="NM_001182176.1"/>
</dbReference>
<dbReference type="PDB" id="7SGZ">
    <property type="method" value="EM"/>
    <property type="resolution" value="3.17 A"/>
    <property type="chains" value="F=1-474"/>
</dbReference>
<dbReference type="PDB" id="7SH2">
    <property type="method" value="EM"/>
    <property type="resolution" value="3.23 A"/>
    <property type="chains" value="F=1-474"/>
</dbReference>
<dbReference type="PDB" id="7ST9">
    <property type="method" value="EM"/>
    <property type="resolution" value="2.20 A"/>
    <property type="chains" value="H=1-474"/>
</dbReference>
<dbReference type="PDB" id="7STB">
    <property type="method" value="EM"/>
    <property type="resolution" value="2.72 A"/>
    <property type="chains" value="H=1-474"/>
</dbReference>
<dbReference type="PDB" id="8DQW">
    <property type="method" value="EM"/>
    <property type="resolution" value="2.10 A"/>
    <property type="chains" value="H=1-474"/>
</dbReference>
<dbReference type="PDB" id="8FS3">
    <property type="method" value="EM"/>
    <property type="resolution" value="2.93 A"/>
    <property type="chains" value="F=1-474"/>
</dbReference>
<dbReference type="PDB" id="8FS4">
    <property type="method" value="EM"/>
    <property type="resolution" value="2.94 A"/>
    <property type="chains" value="F=1-474"/>
</dbReference>
<dbReference type="PDB" id="8FS5">
    <property type="method" value="EM"/>
    <property type="resolution" value="2.76 A"/>
    <property type="chains" value="F=1-474"/>
</dbReference>
<dbReference type="PDB" id="8FS6">
    <property type="method" value="EM"/>
    <property type="resolution" value="2.90 A"/>
    <property type="chains" value="F=1-474"/>
</dbReference>
<dbReference type="PDB" id="8FS7">
    <property type="method" value="EM"/>
    <property type="resolution" value="2.85 A"/>
    <property type="chains" value="F=1-474"/>
</dbReference>
<dbReference type="PDB" id="8FS8">
    <property type="method" value="EM"/>
    <property type="resolution" value="3.04 A"/>
    <property type="chains" value="F=1-474"/>
</dbReference>
<dbReference type="PDBsum" id="7SGZ"/>
<dbReference type="PDBsum" id="7SH2"/>
<dbReference type="PDBsum" id="7ST9"/>
<dbReference type="PDBsum" id="7STB"/>
<dbReference type="PDBsum" id="8DQW"/>
<dbReference type="PDBsum" id="8FS3"/>
<dbReference type="PDBsum" id="8FS4"/>
<dbReference type="PDBsum" id="8FS5"/>
<dbReference type="PDBsum" id="8FS6"/>
<dbReference type="PDBsum" id="8FS7"/>
<dbReference type="PDBsum" id="8FS8"/>
<dbReference type="EMDB" id="EMD-25422"/>
<dbReference type="EMDB" id="EMD-25423"/>
<dbReference type="EMDB" id="EMD-27662"/>
<dbReference type="EMDB" id="EMD-29412"/>
<dbReference type="EMDB" id="EMD-29413"/>
<dbReference type="EMDB" id="EMD-29414"/>
<dbReference type="EMDB" id="EMD-29415"/>
<dbReference type="EMDB" id="EMD-29416"/>
<dbReference type="EMDB" id="EMD-29417"/>
<dbReference type="SMR" id="Q02574"/>
<dbReference type="BioGRID" id="31554">
    <property type="interactions" value="174"/>
</dbReference>
<dbReference type="ComplexPortal" id="CPX-1806">
    <property type="entry name" value="Rad17-Mec3-Ddc1 checkpoint clamp complex"/>
</dbReference>
<dbReference type="DIP" id="DIP-1432N"/>
<dbReference type="FunCoup" id="Q02574">
    <property type="interactions" value="319"/>
</dbReference>
<dbReference type="IntAct" id="Q02574">
    <property type="interactions" value="26"/>
</dbReference>
<dbReference type="MINT" id="Q02574"/>
<dbReference type="STRING" id="4932.YLR288C"/>
<dbReference type="iPTMnet" id="Q02574"/>
<dbReference type="PaxDb" id="4932-YLR288C"/>
<dbReference type="PeptideAtlas" id="Q02574"/>
<dbReference type="EnsemblFungi" id="YLR288C_mRNA">
    <property type="protein sequence ID" value="YLR288C"/>
    <property type="gene ID" value="YLR288C"/>
</dbReference>
<dbReference type="GeneID" id="850995"/>
<dbReference type="KEGG" id="sce:YLR288C"/>
<dbReference type="AGR" id="SGD:S000004279"/>
<dbReference type="SGD" id="S000004279">
    <property type="gene designation" value="MEC3"/>
</dbReference>
<dbReference type="VEuPathDB" id="FungiDB:YLR288C"/>
<dbReference type="eggNOG" id="ENOG502RA7D">
    <property type="taxonomic scope" value="Eukaryota"/>
</dbReference>
<dbReference type="HOGENOM" id="CLU_597417_0_0_1"/>
<dbReference type="InParanoid" id="Q02574"/>
<dbReference type="OMA" id="EPQVWCK"/>
<dbReference type="OrthoDB" id="419537at2759"/>
<dbReference type="BioCyc" id="YEAST:G3O-32383-MONOMER"/>
<dbReference type="Reactome" id="R-SCE-176187">
    <property type="pathway name" value="Activation of ATR in response to replication stress"/>
</dbReference>
<dbReference type="BioGRID-ORCS" id="850995">
    <property type="hits" value="0 hits in 10 CRISPR screens"/>
</dbReference>
<dbReference type="PRO" id="PR:Q02574"/>
<dbReference type="Proteomes" id="UP000002311">
    <property type="component" value="Chromosome XII"/>
</dbReference>
<dbReference type="RNAct" id="Q02574">
    <property type="molecule type" value="protein"/>
</dbReference>
<dbReference type="GO" id="GO:0030896">
    <property type="term" value="C:checkpoint clamp complex"/>
    <property type="evidence" value="ECO:0000314"/>
    <property type="project" value="SGD"/>
</dbReference>
<dbReference type="GO" id="GO:0000781">
    <property type="term" value="C:chromosome, telomeric region"/>
    <property type="evidence" value="ECO:0007669"/>
    <property type="project" value="GOC"/>
</dbReference>
<dbReference type="GO" id="GO:0005634">
    <property type="term" value="C:nucleus"/>
    <property type="evidence" value="ECO:0000303"/>
    <property type="project" value="ComplexPortal"/>
</dbReference>
<dbReference type="GO" id="GO:0035861">
    <property type="term" value="C:site of double-strand break"/>
    <property type="evidence" value="ECO:0000318"/>
    <property type="project" value="GO_Central"/>
</dbReference>
<dbReference type="GO" id="GO:0003677">
    <property type="term" value="F:DNA binding"/>
    <property type="evidence" value="ECO:0000314"/>
    <property type="project" value="SGD"/>
</dbReference>
<dbReference type="GO" id="GO:0000077">
    <property type="term" value="P:DNA damage checkpoint signaling"/>
    <property type="evidence" value="ECO:0000314"/>
    <property type="project" value="ComplexPortal"/>
</dbReference>
<dbReference type="GO" id="GO:0000724">
    <property type="term" value="P:double-strand break repair via homologous recombination"/>
    <property type="evidence" value="ECO:0000318"/>
    <property type="project" value="GO_Central"/>
</dbReference>
<dbReference type="GO" id="GO:0044778">
    <property type="term" value="P:meiotic DNA integrity checkpoint signaling"/>
    <property type="evidence" value="ECO:0000318"/>
    <property type="project" value="GO_Central"/>
</dbReference>
<dbReference type="GO" id="GO:0033314">
    <property type="term" value="P:mitotic DNA replication checkpoint signaling"/>
    <property type="evidence" value="ECO:0000318"/>
    <property type="project" value="GO_Central"/>
</dbReference>
<dbReference type="GO" id="GO:0031573">
    <property type="term" value="P:mitotic intra-S DNA damage checkpoint signaling"/>
    <property type="evidence" value="ECO:0000318"/>
    <property type="project" value="GO_Central"/>
</dbReference>
<dbReference type="GO" id="GO:0006289">
    <property type="term" value="P:nucleotide-excision repair"/>
    <property type="evidence" value="ECO:0000318"/>
    <property type="project" value="GO_Central"/>
</dbReference>
<dbReference type="GO" id="GO:0031509">
    <property type="term" value="P:subtelomeric heterochromatin formation"/>
    <property type="evidence" value="ECO:0000315"/>
    <property type="project" value="SGD"/>
</dbReference>
<dbReference type="GO" id="GO:0000723">
    <property type="term" value="P:telomere maintenance"/>
    <property type="evidence" value="ECO:0000318"/>
    <property type="project" value="GO_Central"/>
</dbReference>
<dbReference type="GO" id="GO:0000722">
    <property type="term" value="P:telomere maintenance via recombination"/>
    <property type="evidence" value="ECO:0000316"/>
    <property type="project" value="SGD"/>
</dbReference>
<dbReference type="Gene3D" id="3.70.10.10">
    <property type="match status" value="1"/>
</dbReference>
<dbReference type="InterPro" id="IPR007150">
    <property type="entry name" value="Hus1/Mec3"/>
</dbReference>
<dbReference type="PANTHER" id="PTHR12900:SF0">
    <property type="entry name" value="CHECKPOINT PROTEIN"/>
    <property type="match status" value="1"/>
</dbReference>
<dbReference type="PANTHER" id="PTHR12900">
    <property type="entry name" value="MITOTIC AND DNA DAMAGE CHECKPOINT PROTEIN HUS1"/>
    <property type="match status" value="1"/>
</dbReference>
<dbReference type="Pfam" id="PF04005">
    <property type="entry name" value="Hus1"/>
    <property type="match status" value="1"/>
</dbReference>
<evidence type="ECO:0000269" key="1">
    <source>
    </source>
</evidence>
<evidence type="ECO:0000269" key="2">
    <source>
    </source>
</evidence>
<evidence type="ECO:0000269" key="3">
    <source>
    </source>
</evidence>
<evidence type="ECO:0000269" key="4">
    <source>
    </source>
</evidence>
<evidence type="ECO:0000269" key="5">
    <source>
    </source>
</evidence>
<evidence type="ECO:0000269" key="6">
    <source>
    </source>
</evidence>
<evidence type="ECO:0000269" key="7">
    <source>
    </source>
</evidence>
<evidence type="ECO:0000269" key="8">
    <source>
    </source>
</evidence>
<evidence type="ECO:0000269" key="9">
    <source>
    </source>
</evidence>
<evidence type="ECO:0000269" key="10">
    <source>
    </source>
</evidence>
<evidence type="ECO:0000269" key="11">
    <source>
    </source>
</evidence>
<evidence type="ECO:0000305" key="12"/>
<evidence type="ECO:0007744" key="13">
    <source>
    </source>
</evidence>
<evidence type="ECO:0007829" key="14">
    <source>
        <dbReference type="PDB" id="7STB"/>
    </source>
</evidence>
<evidence type="ECO:0007829" key="15">
    <source>
        <dbReference type="PDB" id="8DQW"/>
    </source>
</evidence>
<evidence type="ECO:0007829" key="16">
    <source>
        <dbReference type="PDB" id="8FS3"/>
    </source>
</evidence>
<reference key="1">
    <citation type="journal article" date="1995" name="Science">
        <title>Yeast checkpoint genes in DNA damage processing: implications for repair and arrest.</title>
        <authorList>
            <person name="Lydall D."/>
            <person name="Weinert T.A."/>
        </authorList>
    </citation>
    <scope>NUCLEOTIDE SEQUENCE [GENOMIC DNA]</scope>
</reference>
<reference key="2">
    <citation type="submission" date="1997-06" db="EMBL/GenBank/DDBJ databases">
        <authorList>
            <person name="Lydall D."/>
            <person name="Weinert T.A."/>
        </authorList>
    </citation>
    <scope>SEQUENCE REVISION TO 27; 411; 415-222 AND 454</scope>
</reference>
<reference key="3">
    <citation type="journal article" date="1997" name="Nature">
        <title>The nucleotide sequence of Saccharomyces cerevisiae chromosome XII.</title>
        <authorList>
            <person name="Johnston M."/>
            <person name="Hillier L.W."/>
            <person name="Riles L."/>
            <person name="Albermann K."/>
            <person name="Andre B."/>
            <person name="Ansorge W."/>
            <person name="Benes V."/>
            <person name="Brueckner M."/>
            <person name="Delius H."/>
            <person name="Dubois E."/>
            <person name="Duesterhoeft A."/>
            <person name="Entian K.-D."/>
            <person name="Floeth M."/>
            <person name="Goffeau A."/>
            <person name="Hebling U."/>
            <person name="Heumann K."/>
            <person name="Heuss-Neitzel D."/>
            <person name="Hilbert H."/>
            <person name="Hilger F."/>
            <person name="Kleine K."/>
            <person name="Koetter P."/>
            <person name="Louis E.J."/>
            <person name="Messenguy F."/>
            <person name="Mewes H.-W."/>
            <person name="Miosga T."/>
            <person name="Moestl D."/>
            <person name="Mueller-Auer S."/>
            <person name="Nentwich U."/>
            <person name="Obermaier B."/>
            <person name="Piravandi E."/>
            <person name="Pohl T.M."/>
            <person name="Portetelle D."/>
            <person name="Purnelle B."/>
            <person name="Rechmann S."/>
            <person name="Rieger M."/>
            <person name="Rinke M."/>
            <person name="Rose M."/>
            <person name="Scharfe M."/>
            <person name="Scherens B."/>
            <person name="Scholler P."/>
            <person name="Schwager C."/>
            <person name="Schwarz S."/>
            <person name="Underwood A.P."/>
            <person name="Urrestarazu L.A."/>
            <person name="Vandenbol M."/>
            <person name="Verhasselt P."/>
            <person name="Vierendeels F."/>
            <person name="Voet M."/>
            <person name="Volckaert G."/>
            <person name="Voss H."/>
            <person name="Wambutt R."/>
            <person name="Wedler E."/>
            <person name="Wedler H."/>
            <person name="Zimmermann F.K."/>
            <person name="Zollner A."/>
            <person name="Hani J."/>
            <person name="Hoheisel J.D."/>
        </authorList>
    </citation>
    <scope>NUCLEOTIDE SEQUENCE [LARGE SCALE GENOMIC DNA]</scope>
    <source>
        <strain>ATCC 204508 / S288c</strain>
    </source>
</reference>
<reference key="4">
    <citation type="journal article" date="2014" name="G3 (Bethesda)">
        <title>The reference genome sequence of Saccharomyces cerevisiae: Then and now.</title>
        <authorList>
            <person name="Engel S.R."/>
            <person name="Dietrich F.S."/>
            <person name="Fisk D.G."/>
            <person name="Binkley G."/>
            <person name="Balakrishnan R."/>
            <person name="Costanzo M.C."/>
            <person name="Dwight S.S."/>
            <person name="Hitz B.C."/>
            <person name="Karra K."/>
            <person name="Nash R.S."/>
            <person name="Weng S."/>
            <person name="Wong E.D."/>
            <person name="Lloyd P."/>
            <person name="Skrzypek M.S."/>
            <person name="Miyasato S.R."/>
            <person name="Simison M."/>
            <person name="Cherry J.M."/>
        </authorList>
    </citation>
    <scope>GENOME REANNOTATION</scope>
    <source>
        <strain>ATCC 204508 / S288c</strain>
    </source>
</reference>
<reference key="5">
    <citation type="journal article" date="1998" name="EMBO J.">
        <title>Mec1p is essential for phosphorylation of the yeast DNA damage checkpoint protein Ddc1p, which physically interacts with Mec3p.</title>
        <authorList>
            <person name="Paciotti V."/>
            <person name="Lucchini G."/>
            <person name="Plevani P."/>
            <person name="Longhese M.P."/>
        </authorList>
    </citation>
    <scope>INTERACTION WITH DDC1</scope>
</reference>
<reference key="6">
    <citation type="journal article" date="1999" name="Mol. Cell. Biol.">
        <title>Role of a complex containing Rad17, Mec3, and Ddc1 in the yeast DNA damage checkpoint pathway.</title>
        <authorList>
            <person name="Kondo T."/>
            <person name="Matsumoto K."/>
            <person name="Sugimoto K."/>
        </authorList>
    </citation>
    <scope>IDENTIFICATION IN THE CHECKPOINT CLAMP COMPLEX</scope>
    <scope>FUNCTION OF THE CHECKPOINT CLAMP COMPLEX</scope>
</reference>
<reference key="7">
    <citation type="journal article" date="1999" name="Nat. Genet.">
        <title>Interaction between Set1p and checkpoint protein Mec3p in DNA repair and telomere functions.</title>
        <authorList>
            <person name="Corda Y."/>
            <person name="Schramke V."/>
            <person name="Longhese M.P."/>
            <person name="Smokvina T."/>
            <person name="Paciotti V."/>
            <person name="Brevet V."/>
            <person name="Gilson E."/>
            <person name="Geli V."/>
        </authorList>
    </citation>
    <scope>FUNCTION</scope>
    <scope>INTERACTION WITH SET1</scope>
</reference>
<reference key="8">
    <citation type="journal article" date="2002" name="Proc. Natl. Acad. Sci. U.S.A.">
        <title>A dominant-negative MEC3 mutant uncovers new functions for the Rad17 complex and Tel1.</title>
        <authorList>
            <person name="Giannattasio M."/>
            <person name="Sommariva E."/>
            <person name="Vercillo R."/>
            <person name="Lippi-Boncambi F."/>
            <person name="Liberi G."/>
            <person name="Foiani M."/>
            <person name="Plevani P."/>
            <person name="Muzi-Falconi M."/>
        </authorList>
    </citation>
    <scope>FUNCTION OF THE CHECKPOINT CLAMP COMPLEX</scope>
</reference>
<reference key="9">
    <citation type="journal article" date="2003" name="J. Biol. Chem.">
        <title>Correlation between checkpoint activation and in vivo assembly of the yeast checkpoint complex Rad17-Mec3-Ddc1.</title>
        <authorList>
            <person name="Giannattasio M."/>
            <person name="Sabbioneda S."/>
            <person name="Minuzzo M."/>
            <person name="Plevani P."/>
            <person name="Muzi-Falconi M."/>
        </authorList>
    </citation>
    <scope>IDENTIFICATION IN THE CHECKPOINT CLAMP COMPLEX</scope>
    <scope>FUNCTION OF THE CHECKPOINT CLAMP COMPLEX</scope>
</reference>
<reference key="10">
    <citation type="journal article" date="2003" name="Nature">
        <title>Global analysis of protein expression in yeast.</title>
        <authorList>
            <person name="Ghaemmaghami S."/>
            <person name="Huh W.-K."/>
            <person name="Bower K."/>
            <person name="Howson R.W."/>
            <person name="Belle A."/>
            <person name="Dephoure N."/>
            <person name="O'Shea E.K."/>
            <person name="Weissman J.S."/>
        </authorList>
    </citation>
    <scope>LEVEL OF PROTEIN EXPRESSION [LARGE SCALE ANALYSIS]</scope>
</reference>
<reference key="11">
    <citation type="journal article" date="2003" name="Proc. Natl. Acad. Sci. U.S.A.">
        <title>Yeast Rad17/Mec3/Ddc1: a sliding clamp for the DNA damage checkpoint.</title>
        <authorList>
            <person name="Majka J."/>
            <person name="Burgers P.M.J."/>
        </authorList>
    </citation>
    <scope>INTERACTION OF THE CHECKPOINT CLAMP COMPLEX WITH THE RFC-RAD24 CHECKPOINT CLAMP LOADER COMPLEX</scope>
    <scope>FUNCTION OF THE CHECKPOINT CLAMP COMPLEX</scope>
</reference>
<reference key="12">
    <citation type="journal article" date="2004" name="J. Biol. Chem.">
        <title>Requirement for ATP by the DNA damage checkpoint clamp loader.</title>
        <authorList>
            <person name="Majka J."/>
            <person name="Chung B.Y."/>
            <person name="Burgers P.M.J."/>
        </authorList>
    </citation>
    <scope>INTERACTION OF THE CHECKPOINT CLAMP COMPLEX WITH THE RFC-RAD24 CHECKPOINT CLAMP LOADER COMPLEX</scope>
</reference>
<reference key="13">
    <citation type="journal article" date="2005" name="DNA Repair">
        <title>Function of Rad17/Mec3/Ddc1 and its partial complexes in the DNA damage checkpoint.</title>
        <authorList>
            <person name="Majka J."/>
            <person name="Burgers P.M.J."/>
        </authorList>
    </citation>
    <scope>IDENTIFICATION IN THE CHECKPOINT CLAMP COMPLEX</scope>
    <scope>FUNCTION OF THE CHECKPOINT CLAMP COMPLEX</scope>
</reference>
<reference key="14">
    <citation type="journal article" date="2005" name="J. Biol. Chem.">
        <title>The 9-1-1 checkpoint clamp physically interacts with polzeta and is partially required for spontaneous polzeta-dependent mutagenesis in Saccharomyces cerevisiae.</title>
        <authorList>
            <person name="Sabbioneda S."/>
            <person name="Minesinger B.K."/>
            <person name="Giannattasio M."/>
            <person name="Plevani P."/>
            <person name="Muzi-Falconi M."/>
            <person name="Jinks-Robertson S."/>
        </authorList>
    </citation>
    <scope>INTERACTION WITH REV7</scope>
    <scope>FUNCTION OF THE CHECKPOINT CLAMP COMPLEX</scope>
</reference>
<reference key="15">
    <citation type="journal article" date="2006" name="DNA Repair">
        <title>Psoralen-sensitive mutant pso9-1 of Saccharomyces cerevisiae contains a mutant allele of the DNA damage checkpoint gene MEC3.</title>
        <authorList>
            <person name="Cardone J.M."/>
            <person name="Revers L.F."/>
            <person name="Machado R.M."/>
            <person name="Bonatto D."/>
            <person name="Brendel M."/>
            <person name="Henriques J.A.P."/>
        </authorList>
    </citation>
    <scope>FUNCTION</scope>
    <scope>INTERACTION WITH DDC1 AND RAD17</scope>
</reference>
<reference key="16">
    <citation type="journal article" date="2008" name="Mol. Cell. Proteomics">
        <title>A multidimensional chromatography technology for in-depth phosphoproteome analysis.</title>
        <authorList>
            <person name="Albuquerque C.P."/>
            <person name="Smolka M.B."/>
            <person name="Payne S.H."/>
            <person name="Bafna V."/>
            <person name="Eng J."/>
            <person name="Zhou H."/>
        </authorList>
    </citation>
    <scope>PHOSPHORYLATION [LARGE SCALE ANALYSIS] AT SER-452</scope>
    <scope>IDENTIFICATION BY MASS SPECTROMETRY [LARGE SCALE ANALYSIS]</scope>
</reference>
<feature type="chain" id="PRO_0000096344" description="DNA damage checkpoint control protein MEC3">
    <location>
        <begin position="1"/>
        <end position="474"/>
    </location>
</feature>
<feature type="modified residue" description="Phosphoserine" evidence="13">
    <location>
        <position position="452"/>
    </location>
</feature>
<feature type="sequence conflict" description="In Ref. 1; AAB61448." evidence="12" ref="1">
    <original>T</original>
    <variation>I</variation>
    <location>
        <position position="120"/>
    </location>
</feature>
<feature type="sequence conflict" description="In Ref. 1; AAB61448." evidence="12" ref="1">
    <original>N</original>
    <variation>D</variation>
    <location>
        <position position="176"/>
    </location>
</feature>
<feature type="sequence conflict" description="In Ref. 1; AAB61448." evidence="12" ref="1">
    <original>D</original>
    <variation>E</variation>
    <location>
        <position position="454"/>
    </location>
</feature>
<feature type="strand" evidence="15">
    <location>
        <begin position="3"/>
        <end position="7"/>
    </location>
</feature>
<feature type="strand" evidence="15">
    <location>
        <begin position="9"/>
        <end position="11"/>
    </location>
</feature>
<feature type="helix" evidence="15">
    <location>
        <begin position="13"/>
        <end position="29"/>
    </location>
</feature>
<feature type="strand" evidence="15">
    <location>
        <begin position="31"/>
        <end position="37"/>
    </location>
</feature>
<feature type="strand" evidence="15">
    <location>
        <begin position="39"/>
        <end position="46"/>
    </location>
</feature>
<feature type="helix" evidence="15">
    <location>
        <begin position="53"/>
        <end position="56"/>
    </location>
</feature>
<feature type="helix" evidence="15">
    <location>
        <begin position="58"/>
        <end position="62"/>
    </location>
</feature>
<feature type="strand" evidence="15">
    <location>
        <begin position="67"/>
        <end position="73"/>
    </location>
</feature>
<feature type="helix" evidence="15">
    <location>
        <begin position="74"/>
        <end position="76"/>
    </location>
</feature>
<feature type="strand" evidence="16">
    <location>
        <begin position="77"/>
        <end position="79"/>
    </location>
</feature>
<feature type="strand" evidence="15">
    <location>
        <begin position="80"/>
        <end position="82"/>
    </location>
</feature>
<feature type="helix" evidence="15">
    <location>
        <begin position="87"/>
        <end position="89"/>
    </location>
</feature>
<feature type="strand" evidence="15">
    <location>
        <begin position="91"/>
        <end position="96"/>
    </location>
</feature>
<feature type="helix" evidence="15">
    <location>
        <begin position="97"/>
        <end position="113"/>
    </location>
</feature>
<feature type="strand" evidence="15">
    <location>
        <begin position="119"/>
        <end position="124"/>
    </location>
</feature>
<feature type="strand" evidence="15">
    <location>
        <begin position="153"/>
        <end position="161"/>
    </location>
</feature>
<feature type="strand" evidence="15">
    <location>
        <begin position="202"/>
        <end position="205"/>
    </location>
</feature>
<feature type="strand" evidence="15">
    <location>
        <begin position="208"/>
        <end position="211"/>
    </location>
</feature>
<feature type="helix" evidence="15">
    <location>
        <begin position="214"/>
        <end position="218"/>
    </location>
</feature>
<feature type="strand" evidence="14">
    <location>
        <begin position="227"/>
        <end position="229"/>
    </location>
</feature>
<feature type="strand" evidence="15">
    <location>
        <begin position="231"/>
        <end position="234"/>
    </location>
</feature>
<feature type="strand" evidence="16">
    <location>
        <begin position="238"/>
        <end position="240"/>
    </location>
</feature>
<feature type="helix" evidence="15">
    <location>
        <begin position="243"/>
        <end position="251"/>
    </location>
</feature>
<feature type="helix" evidence="15">
    <location>
        <begin position="252"/>
        <end position="255"/>
    </location>
</feature>
<feature type="strand" evidence="15">
    <location>
        <begin position="261"/>
        <end position="268"/>
    </location>
</feature>
<feature type="strand" evidence="15">
    <location>
        <begin position="279"/>
        <end position="285"/>
    </location>
</feature>
<feature type="strand" evidence="15">
    <location>
        <begin position="287"/>
        <end position="296"/>
    </location>
</feature>
<feature type="strand" evidence="15">
    <location>
        <begin position="405"/>
        <end position="411"/>
    </location>
</feature>
<feature type="helix" evidence="15">
    <location>
        <begin position="412"/>
        <end position="424"/>
    </location>
</feature>
<feature type="strand" evidence="15">
    <location>
        <begin position="426"/>
        <end position="433"/>
    </location>
</feature>
<feature type="turn" evidence="15">
    <location>
        <begin position="434"/>
        <end position="436"/>
    </location>
</feature>
<feature type="strand" evidence="15">
    <location>
        <begin position="437"/>
        <end position="444"/>
    </location>
</feature>
<feature type="strand" evidence="15">
    <location>
        <begin position="462"/>
        <end position="469"/>
    </location>
</feature>
<protein>
    <recommendedName>
        <fullName>DNA damage checkpoint control protein MEC3</fullName>
    </recommendedName>
</protein>
<gene>
    <name type="primary">MEC3</name>
    <name type="synonym">PIP3</name>
    <name type="synonym">PSO9</name>
    <name type="ordered locus">YLR288C</name>
    <name type="ORF">L8003.15</name>
</gene>
<keyword id="KW-0002">3D-structure</keyword>
<keyword id="KW-0131">Cell cycle</keyword>
<keyword id="KW-0227">DNA damage</keyword>
<keyword id="KW-0234">DNA repair</keyword>
<keyword id="KW-0238">DNA-binding</keyword>
<keyword id="KW-0539">Nucleus</keyword>
<keyword id="KW-0597">Phosphoprotein</keyword>
<keyword id="KW-1185">Reference proteome</keyword>
<organism>
    <name type="scientific">Saccharomyces cerevisiae (strain ATCC 204508 / S288c)</name>
    <name type="common">Baker's yeast</name>
    <dbReference type="NCBI Taxonomy" id="559292"/>
    <lineage>
        <taxon>Eukaryota</taxon>
        <taxon>Fungi</taxon>
        <taxon>Dikarya</taxon>
        <taxon>Ascomycota</taxon>
        <taxon>Saccharomycotina</taxon>
        <taxon>Saccharomycetes</taxon>
        <taxon>Saccharomycetales</taxon>
        <taxon>Saccharomycetaceae</taxon>
        <taxon>Saccharomyces</taxon>
    </lineage>
</organism>
<comment type="function">
    <text evidence="1 2 3 6 7 8 10 11">Component of the checkpoint clamp complex involved in the surveillance mechanism that allows the DNA repair pathways to act to restore the integrity of the DNA prior to DNA synthesis or separation of the replicated chromosomes. Associates with sites of DNA damage and modulates the MEC1 signaling pathway and the activation of RAD53 in response to DNA damage at phase G1. The complex also physically regulates DNA polymerase zeta-dependent mutagenesis by controlling the access of polymerase zeta to damaged DNA.</text>
</comment>
<comment type="subunit">
    <text evidence="2 3 5 6 7 8 9 10 11">Component of the checkpoint clamp complex composed of DDC1, MEC3 and RAD17. The interaction with MEC3 is performed in a RAD17-dependent manner. The checkpoint clamp complex loads onto DNA. Interacts with the DNA polymerase zeta subunit REV7. Also forms a heterotrimer with 2 RAD17 subunits. Interacts with SET1.</text>
</comment>
<comment type="interaction">
    <interactant intactId="EBI-10658">
        <id>Q02574</id>
    </interactant>
    <interactant intactId="EBI-30769">
        <id>Q08949</id>
        <label>DDC1</label>
    </interactant>
    <organismsDiffer>false</organismsDiffer>
    <experiments>5</experiments>
</comment>
<comment type="interaction">
    <interactant intactId="EBI-10658">
        <id>Q02574</id>
    </interactant>
    <interactant intactId="EBI-14652">
        <id>P48581</id>
        <label>RAD17</label>
    </interactant>
    <organismsDiffer>false</organismsDiffer>
    <experiments>11</experiments>
</comment>
<comment type="interaction">
    <interactant intactId="EBI-10658">
        <id>Q02574</id>
    </interactant>
    <interactant intactId="EBI-14960">
        <id>P38927</id>
        <label>REV7</label>
    </interactant>
    <organismsDiffer>false</organismsDiffer>
    <experiments>3</experiments>
</comment>
<comment type="interaction">
    <interactant intactId="EBI-10658">
        <id>Q02574</id>
    </interactant>
    <interactant intactId="EBI-16977">
        <id>P38827</id>
        <label>SET1</label>
    </interactant>
    <organismsDiffer>false</organismsDiffer>
    <experiments>3</experiments>
</comment>
<comment type="subcellular location">
    <subcellularLocation>
        <location evidence="12">Nucleus</location>
    </subcellularLocation>
</comment>
<comment type="miscellaneous">
    <text evidence="4">Present with 414 molecules/cell in log phase SD medium.</text>
</comment>
<comment type="similarity">
    <text evidence="12">Belongs to the MEC3 family.</text>
</comment>
<proteinExistence type="evidence at protein level"/>
<sequence length="474" mass="53146">MKLKLIVNGCEAPDDYKLLRTTINTVASLRKTAILRFNSERLTIISTPKSSLNSSNNGTILRGDTGQLWCTIPHDVFRLYTVISARELNTITMECNCDSLLSVFKRYDRVMNQGSSSNMTIKLQSMPEWNTNNGTLSGGTAGGVDTTSKPNPICALGITFEEIVHTSGPNDAIVMNGGVDEHNGLPTTVGTGNLLASNKVIMHSFKVPVKLLFRAQDTRIQEPMINYIQLMMYKLPPISGEFGSAFHGFIRRVERYSNVNHIHLMGVKKKEHGNEGDDVELKIIVNELDWHLEICWNGPLDSVIQRQEGLTDNPSQNQHIDTDGRQEEGSLPIIEADKPMSSLYTNTRDREMEENIRYDEDLLRIEDSSIADTRGNIYTADTSGDTEFNDISVMVEKAEQESSSTHEVIIRCKDWKVCSKLYAAFEEVVLAISHDESCVFHCSLDRGSLEDSEDVEKPRERGQIIYYIARSKGL</sequence>